<feature type="chain" id="PRO_0000452517" description="Terpene cyclase 6">
    <location>
        <begin position="1"/>
        <end position="371"/>
    </location>
</feature>
<feature type="short sequence motif" description="D(D/E)XX(D/E) motif" evidence="2">
    <location>
        <begin position="144"/>
        <end position="148"/>
    </location>
</feature>
<feature type="short sequence motif" description="NSE motif" evidence="2">
    <location>
        <begin position="266"/>
        <end position="274"/>
    </location>
</feature>
<feature type="short sequence motif" description="WxxxxxRY motif" evidence="1">
    <location>
        <begin position="352"/>
        <end position="359"/>
    </location>
</feature>
<feature type="binding site" evidence="2">
    <location>
        <position position="144"/>
    </location>
    <ligand>
        <name>Mg(2+)</name>
        <dbReference type="ChEBI" id="CHEBI:18420"/>
        <label>1</label>
    </ligand>
</feature>
<feature type="binding site" evidence="2">
    <location>
        <position position="144"/>
    </location>
    <ligand>
        <name>Mg(2+)</name>
        <dbReference type="ChEBI" id="CHEBI:18420"/>
        <label>2</label>
    </ligand>
</feature>
<feature type="binding site" evidence="2">
    <location>
        <position position="266"/>
    </location>
    <ligand>
        <name>Mg(2+)</name>
        <dbReference type="ChEBI" id="CHEBI:18420"/>
        <label>3</label>
    </ligand>
</feature>
<feature type="binding site" evidence="2">
    <location>
        <position position="270"/>
    </location>
    <ligand>
        <name>Mg(2+)</name>
        <dbReference type="ChEBI" id="CHEBI:18420"/>
        <label>3</label>
    </ligand>
</feature>
<feature type="binding site" evidence="2">
    <location>
        <position position="274"/>
    </location>
    <ligand>
        <name>Mg(2+)</name>
        <dbReference type="ChEBI" id="CHEBI:18420"/>
        <label>3</label>
    </ligand>
</feature>
<feature type="binding site" evidence="2">
    <location>
        <position position="358"/>
    </location>
    <ligand>
        <name>(2E,6E)-farnesyl diphosphate</name>
        <dbReference type="ChEBI" id="CHEBI:175763"/>
    </ligand>
</feature>
<feature type="binding site" evidence="2">
    <location>
        <position position="359"/>
    </location>
    <ligand>
        <name>(2E,6E)-farnesyl diphosphate</name>
        <dbReference type="ChEBI" id="CHEBI:175763"/>
    </ligand>
</feature>
<comment type="function">
    <text evidence="3">Terpene cyclase that catalyzes the cyclization of farnesyl diphosphate (FPP) to the spirocyclic sesquiterpene alpha-acorenol.</text>
</comment>
<comment type="catalytic activity">
    <reaction evidence="3">
        <text>(2E,6E)-farnesyl diphosphate + H2O = (-)-alpha-acorenol + diphosphate</text>
        <dbReference type="Rhea" id="RHEA:66636"/>
        <dbReference type="ChEBI" id="CHEBI:15377"/>
        <dbReference type="ChEBI" id="CHEBI:33019"/>
        <dbReference type="ChEBI" id="CHEBI:167324"/>
        <dbReference type="ChEBI" id="CHEBI:175763"/>
    </reaction>
    <physiologicalReaction direction="left-to-right" evidence="3">
        <dbReference type="Rhea" id="RHEA:66637"/>
    </physiologicalReaction>
</comment>
<comment type="cofactor">
    <cofactor evidence="2">
        <name>Mg(2+)</name>
        <dbReference type="ChEBI" id="CHEBI:18420"/>
    </cofactor>
    <text evidence="2">Binds 3 Mg(2+) ions per monomer.</text>
</comment>
<comment type="pathway">
    <text evidence="3">Sesquiterpene biosynthesis.</text>
</comment>
<comment type="subunit">
    <text evidence="2">Homodimer.</text>
</comment>
<comment type="domain">
    <text evidence="2">The 2 conserved active-site motifs D(D/E)XX(D/E) and NSE are required for coordinating the divalent metal ions that stabilize the PPi moiety of the substrate.</text>
</comment>
<comment type="domain">
    <text evidence="1">The C-terminal WxxxxxRY motif is frequently found in terpene synthases and is important to guide product formation.</text>
</comment>
<comment type="disruption phenotype">
    <text evidence="3">Abolishes the production of the spirocyclic sesquiterpene alpha-acorenol.</text>
</comment>
<comment type="similarity">
    <text evidence="5">Belongs to the terpene synthase family.</text>
</comment>
<evidence type="ECO:0000250" key="1">
    <source>
        <dbReference type="UniProtKB" id="P9WEY7"/>
    </source>
</evidence>
<evidence type="ECO:0000250" key="2">
    <source>
        <dbReference type="UniProtKB" id="Q9UR08"/>
    </source>
</evidence>
<evidence type="ECO:0000269" key="3">
    <source>
    </source>
</evidence>
<evidence type="ECO:0000303" key="4">
    <source>
    </source>
</evidence>
<evidence type="ECO:0000305" key="5"/>
<gene>
    <name evidence="4" type="primary">Ffsc6</name>
    <name type="ORF">FFUJ_10353</name>
</gene>
<keyword id="KW-0456">Lyase</keyword>
<keyword id="KW-0460">Magnesium</keyword>
<keyword id="KW-0479">Metal-binding</keyword>
<keyword id="KW-1185">Reference proteome</keyword>
<proteinExistence type="evidence at protein level"/>
<accession>S0EGZ9</accession>
<organism>
    <name type="scientific">Gibberella fujikuroi (strain CBS 195.34 / IMI 58289 / NRRL A-6831)</name>
    <name type="common">Bakanae and foot rot disease fungus</name>
    <name type="synonym">Fusarium fujikuroi</name>
    <dbReference type="NCBI Taxonomy" id="1279085"/>
    <lineage>
        <taxon>Eukaryota</taxon>
        <taxon>Fungi</taxon>
        <taxon>Dikarya</taxon>
        <taxon>Ascomycota</taxon>
        <taxon>Pezizomycotina</taxon>
        <taxon>Sordariomycetes</taxon>
        <taxon>Hypocreomycetidae</taxon>
        <taxon>Hypocreales</taxon>
        <taxon>Nectriaceae</taxon>
        <taxon>Fusarium</taxon>
        <taxon>Fusarium fujikuroi species complex</taxon>
    </lineage>
</organism>
<reference key="1">
    <citation type="journal article" date="2013" name="PLoS Pathog.">
        <title>Deciphering the cryptic genome: genome-wide analyses of the rice pathogen Fusarium fujikuroi reveal complex regulation of secondary metabolism and novel metabolites.</title>
        <authorList>
            <person name="Wiemann P."/>
            <person name="Sieber C.M.K."/>
            <person name="von Bargen K.W."/>
            <person name="Studt L."/>
            <person name="Niehaus E.-M."/>
            <person name="Espino J.J."/>
            <person name="Huss K."/>
            <person name="Michielse C.B."/>
            <person name="Albermann S."/>
            <person name="Wagner D."/>
            <person name="Bergner S.V."/>
            <person name="Connolly L.R."/>
            <person name="Fischer A."/>
            <person name="Reuter G."/>
            <person name="Kleigrewe K."/>
            <person name="Bald T."/>
            <person name="Wingfield B.D."/>
            <person name="Ophir R."/>
            <person name="Freeman S."/>
            <person name="Hippler M."/>
            <person name="Smith K.M."/>
            <person name="Brown D.W."/>
            <person name="Proctor R.H."/>
            <person name="Muensterkoetter M."/>
            <person name="Freitag M."/>
            <person name="Humpf H.-U."/>
            <person name="Gueldener U."/>
            <person name="Tudzynski B."/>
        </authorList>
    </citation>
    <scope>NUCLEOTIDE SEQUENCE [LARGE SCALE GENOMIC DNA]</scope>
    <source>
        <strain>CBS 195.34 / IMI 58289 / NRRL A-6831</strain>
    </source>
</reference>
<reference key="2">
    <citation type="journal article" date="2013" name="ChemBioChem">
        <title>Genetic dissection of sesquiterpene biosynthesis by Fusarium fujikuroi.</title>
        <authorList>
            <person name="Brock N.L."/>
            <person name="Huss K."/>
            <person name="Tudzynski B."/>
            <person name="Dickschat J.S."/>
        </authorList>
    </citation>
    <scope>FUNCTION</scope>
    <scope>CATALYTIC ACTIVITY</scope>
    <scope>DISRUPTION PHENOTYPE</scope>
</reference>
<sequence>MPHKDLPIRPLVRAFDPVGPDTLGPPDLDFASLFRERNVPEDAPLTLYPEQLNVPWHTSLPWTRQSKWWVQGEAAGRDLVNRISADKASERGALPVEFMDERRKGKIDELVEDAVSCAVYLYPSSSPTRIELLTQALLLLFFHDDVMERGATQDDATVCDDFVTMIPKNKHMKRYFAEVLECDPILGPGLLRAIGLFVNAGRKKSPFKQDKYATLAEYLDYRRHDIAKPFMIAAIRFGSGVRQTPEETAPFAELEDLYVQHSILINDLYSYDKEMYEARTINGSVVNAVHVIEKLMCVPPHLAKTITRTMSFDVEKKYYAESERFMRDPALNDKQRTYVIALFDCLTGNLFHHATLGRYSRYAEYVFDCKT</sequence>
<protein>
    <recommendedName>
        <fullName evidence="4">Terpene cyclase 6</fullName>
        <ecNumber evidence="3">4.2.3.-</ecNumber>
    </recommendedName>
    <alternativeName>
        <fullName evidence="4">Sesquiterpene synthase 6</fullName>
    </alternativeName>
</protein>
<dbReference type="EC" id="4.2.3.-" evidence="3"/>
<dbReference type="EMBL" id="HF679032">
    <property type="protein sequence ID" value="CCT74306.1"/>
    <property type="molecule type" value="Genomic_DNA"/>
</dbReference>
<dbReference type="SMR" id="S0EGZ9"/>
<dbReference type="VEuPathDB" id="FungiDB:FFUJ_10353"/>
<dbReference type="Proteomes" id="UP000016800">
    <property type="component" value="Chromosome 10"/>
</dbReference>
<dbReference type="GO" id="GO:0016829">
    <property type="term" value="F:lyase activity"/>
    <property type="evidence" value="ECO:0007669"/>
    <property type="project" value="UniProtKB-KW"/>
</dbReference>
<dbReference type="GO" id="GO:0046872">
    <property type="term" value="F:metal ion binding"/>
    <property type="evidence" value="ECO:0007669"/>
    <property type="project" value="UniProtKB-KW"/>
</dbReference>
<dbReference type="Gene3D" id="1.10.600.10">
    <property type="entry name" value="Farnesyl Diphosphate Synthase"/>
    <property type="match status" value="1"/>
</dbReference>
<dbReference type="InterPro" id="IPR008949">
    <property type="entry name" value="Isoprenoid_synthase_dom_sf"/>
</dbReference>
<dbReference type="Pfam" id="PF19086">
    <property type="entry name" value="Terpene_syn_C_2"/>
    <property type="match status" value="1"/>
</dbReference>
<dbReference type="SUPFAM" id="SSF48576">
    <property type="entry name" value="Terpenoid synthases"/>
    <property type="match status" value="1"/>
</dbReference>
<name>FFSC6_GIBF5</name>